<accession>Q7M729</accession>
<gene>
    <name evidence="6" type="primary">Scn4b</name>
    <name type="synonym">Gm1471</name>
</gene>
<comment type="function">
    <text evidence="1">Regulatory subunit of multiple voltage-gated sodium (Nav) channels directly mediating the depolarization of excitable membranes. Navs, also called VGSCs (voltage-gated sodium channels) or VDSCs (voltage-dependent sodium channels), operate by switching between closed and open conformations depending on the voltage difference across the membrane. In the open conformation they allow Na(+) ions to selectively pass through the pore, along their electrochemical gradient. The influx of Na+ ions provokes membrane depolarization, initiating the propagation of electrical signals throughout cells and tissues. The accessory beta subunits participate in localization and functional modulation of the Nav channels. Modulates the activity of SCN1A/Nav1.1. Modulates the activity of SCN2A/Nav1.2.</text>
</comment>
<comment type="subunit">
    <text evidence="1">A voltage-gated sodium (Nav) channel consists of an ion-conducting pore-forming alpha subunit functional on its own that is regulated by one or more beta subunits. The beta subunit SCN4B is disulfide-linked to the pore-forming alpha subunit. Interacts with SCN1A; regulatory subunit of SCN1A/Nav1.1. Interacts with SCN2A; regulatory subunit of SCN2A/Nav1.2.</text>
</comment>
<comment type="subcellular location">
    <subcellularLocation>
        <location evidence="1">Cell membrane</location>
        <topology evidence="1">Single-pass type I membrane protein</topology>
    </subcellularLocation>
</comment>
<comment type="PTM">
    <text evidence="1">Contains an interchain disulfide bond with SCN2A.</text>
</comment>
<comment type="similarity">
    <text evidence="5">Belongs to the sodium channel auxiliary subunit SCN4B (TC 8.A.17) family.</text>
</comment>
<name>SCN4B_MOUSE</name>
<feature type="signal peptide" evidence="2">
    <location>
        <begin position="1"/>
        <end position="30"/>
    </location>
</feature>
<feature type="chain" id="PRO_0000014938" description="Sodium channel regulatory subunit beta-4">
    <location>
        <begin position="31"/>
        <end position="228"/>
    </location>
</feature>
<feature type="topological domain" description="Extracellular" evidence="2">
    <location>
        <begin position="31"/>
        <end position="161"/>
    </location>
</feature>
<feature type="transmembrane region" description="Helical" evidence="2">
    <location>
        <begin position="162"/>
        <end position="182"/>
    </location>
</feature>
<feature type="topological domain" description="Cytoplasmic" evidence="2">
    <location>
        <begin position="183"/>
        <end position="228"/>
    </location>
</feature>
<feature type="domain" description="Ig-like C2-type" evidence="3">
    <location>
        <begin position="31"/>
        <end position="148"/>
    </location>
</feature>
<feature type="region of interest" description="Disordered" evidence="4">
    <location>
        <begin position="199"/>
        <end position="228"/>
    </location>
</feature>
<feature type="compositionally biased region" description="Polar residues" evidence="4">
    <location>
        <begin position="203"/>
        <end position="213"/>
    </location>
</feature>
<feature type="compositionally biased region" description="Basic and acidic residues" evidence="4">
    <location>
        <begin position="219"/>
        <end position="228"/>
    </location>
</feature>
<feature type="glycosylation site" description="N-linked (GlcNAc...) asparagine" evidence="2">
    <location>
        <position position="45"/>
    </location>
</feature>
<feature type="glycosylation site" description="N-linked (GlcNAc...) asparagine" evidence="2">
    <location>
        <position position="71"/>
    </location>
</feature>
<feature type="glycosylation site" description="N-linked (GlcNAc...) asparagine" evidence="2">
    <location>
        <position position="113"/>
    </location>
</feature>
<feature type="glycosylation site" description="N-linked (GlcNAc...) asparagine" evidence="2">
    <location>
        <position position="142"/>
    </location>
</feature>
<feature type="disulfide bond" evidence="3">
    <location>
        <begin position="53"/>
        <end position="131"/>
    </location>
</feature>
<feature type="disulfide bond" description="Interchain; with alpha subunit" evidence="3">
    <location>
        <position position="58"/>
    </location>
</feature>
<feature type="strand" evidence="7">
    <location>
        <begin position="32"/>
        <end position="35"/>
    </location>
</feature>
<feature type="strand" evidence="7">
    <location>
        <begin position="37"/>
        <end position="44"/>
    </location>
</feature>
<feature type="strand" evidence="7">
    <location>
        <begin position="49"/>
        <end position="51"/>
    </location>
</feature>
<feature type="strand" evidence="7">
    <location>
        <begin position="54"/>
        <end position="57"/>
    </location>
</feature>
<feature type="strand" evidence="7">
    <location>
        <begin position="62"/>
        <end position="71"/>
    </location>
</feature>
<feature type="strand" evidence="7">
    <location>
        <begin position="76"/>
        <end position="84"/>
    </location>
</feature>
<feature type="strand" evidence="7">
    <location>
        <begin position="92"/>
        <end position="97"/>
    </location>
</feature>
<feature type="strand" evidence="7">
    <location>
        <begin position="101"/>
        <end position="103"/>
    </location>
</feature>
<feature type="strand" evidence="7">
    <location>
        <begin position="116"/>
        <end position="118"/>
    </location>
</feature>
<feature type="helix" evidence="7">
    <location>
        <begin position="123"/>
        <end position="125"/>
    </location>
</feature>
<feature type="strand" evidence="7">
    <location>
        <begin position="127"/>
        <end position="134"/>
    </location>
</feature>
<feature type="strand" evidence="7">
    <location>
        <begin position="144"/>
        <end position="152"/>
    </location>
</feature>
<feature type="strand" evidence="8">
    <location>
        <begin position="156"/>
        <end position="160"/>
    </location>
</feature>
<reference key="1">
    <citation type="submission" date="2004-06" db="EMBL/GenBank/DDBJ databases">
        <title>cDNA cloning of the mouse sodium channel beta 4 subunit (scn4b).</title>
        <authorList>
            <person name="Puhl H.L. III"/>
            <person name="Ikeda S.R."/>
        </authorList>
    </citation>
    <scope>NUCLEOTIDE SEQUENCE [MRNA]</scope>
    <source>
        <strain>Swiss Webster</strain>
        <tissue>Spinal ganglion</tissue>
    </source>
</reference>
<reference key="2">
    <citation type="journal article" date="2009" name="PLoS Biol.">
        <title>Lineage-specific biology revealed by a finished genome assembly of the mouse.</title>
        <authorList>
            <person name="Church D.M."/>
            <person name="Goodstadt L."/>
            <person name="Hillier L.W."/>
            <person name="Zody M.C."/>
            <person name="Goldstein S."/>
            <person name="She X."/>
            <person name="Bult C.J."/>
            <person name="Agarwala R."/>
            <person name="Cherry J.L."/>
            <person name="DiCuccio M."/>
            <person name="Hlavina W."/>
            <person name="Kapustin Y."/>
            <person name="Meric P."/>
            <person name="Maglott D."/>
            <person name="Birtle Z."/>
            <person name="Marques A.C."/>
            <person name="Graves T."/>
            <person name="Zhou S."/>
            <person name="Teague B."/>
            <person name="Potamousis K."/>
            <person name="Churas C."/>
            <person name="Place M."/>
            <person name="Herschleb J."/>
            <person name="Runnheim R."/>
            <person name="Forrest D."/>
            <person name="Amos-Landgraf J."/>
            <person name="Schwartz D.C."/>
            <person name="Cheng Z."/>
            <person name="Lindblad-Toh K."/>
            <person name="Eichler E.E."/>
            <person name="Ponting C.P."/>
        </authorList>
    </citation>
    <scope>NUCLEOTIDE SEQUENCE [LARGE SCALE GENOMIC DNA]</scope>
    <source>
        <strain>C57BL/6J</strain>
    </source>
</reference>
<reference key="3">
    <citation type="journal article" date="2003" name="J. Neurosci.">
        <title>Sodium channel beta4, a new disulfide-linked auxiliary subunit with similarity to beta2.</title>
        <authorList>
            <person name="Yu F.H."/>
            <person name="Westenbroek R.E."/>
            <person name="Silos-Santiago I."/>
            <person name="McCormick K.A."/>
            <person name="Lawson D."/>
            <person name="Ge P."/>
            <person name="Ferriera H."/>
            <person name="Lilly J."/>
            <person name="DiStefano P.S."/>
            <person name="Catterall W.A."/>
            <person name="Scheuer T."/>
            <person name="Curtis R."/>
        </authorList>
    </citation>
    <scope>IDENTIFICATION</scope>
</reference>
<sequence length="228" mass="25192">MSRAGNRGNTQARWLGTGLLGLFLLPMYLSLEVSVGKATTIYAINGSSILLPCTFSSCYGFENLYFKWSYNNSETSRILIDGIVKNDKSDPKVRVKDDDRITLEGSTKEKTNNISILLSDLEFSDTGRYTCFVRNPKEKDLNNSATIFLQVVDKLEKVDNTVTLIILAVVGGVIGLLVCILLLKKLITFILKKTREKKKECLVSSSGNDNTENGLPGSKAEEKPPTKV</sequence>
<proteinExistence type="evidence at protein level"/>
<evidence type="ECO:0000250" key="1">
    <source>
        <dbReference type="UniProtKB" id="Q8IWT1"/>
    </source>
</evidence>
<evidence type="ECO:0000255" key="2"/>
<evidence type="ECO:0000255" key="3">
    <source>
        <dbReference type="PROSITE-ProRule" id="PRU00114"/>
    </source>
</evidence>
<evidence type="ECO:0000256" key="4">
    <source>
        <dbReference type="SAM" id="MobiDB-lite"/>
    </source>
</evidence>
<evidence type="ECO:0000305" key="5"/>
<evidence type="ECO:0000312" key="6">
    <source>
        <dbReference type="MGI" id="MGI:2687406"/>
    </source>
</evidence>
<evidence type="ECO:0007829" key="7">
    <source>
        <dbReference type="PDB" id="5AYQ"/>
    </source>
</evidence>
<evidence type="ECO:0007829" key="8">
    <source>
        <dbReference type="PDB" id="5XAX"/>
    </source>
</evidence>
<dbReference type="EMBL" id="AY669079">
    <property type="protein sequence ID" value="AAU05394.1"/>
    <property type="molecule type" value="mRNA"/>
</dbReference>
<dbReference type="EMBL" id="AC122305">
    <property type="status" value="NOT_ANNOTATED_CDS"/>
    <property type="molecule type" value="Genomic_DNA"/>
</dbReference>
<dbReference type="EMBL" id="AC122504">
    <property type="status" value="NOT_ANNOTATED_CDS"/>
    <property type="molecule type" value="Genomic_DNA"/>
</dbReference>
<dbReference type="EMBL" id="BK001031">
    <property type="protein sequence ID" value="DAA01205.1"/>
    <property type="molecule type" value="mRNA"/>
</dbReference>
<dbReference type="CCDS" id="CCDS23130.1"/>
<dbReference type="RefSeq" id="NP_001013408.1">
    <property type="nucleotide sequence ID" value="NM_001013390.3"/>
</dbReference>
<dbReference type="PDB" id="5AYQ">
    <property type="method" value="X-ray"/>
    <property type="resolution" value="1.70 A"/>
    <property type="chains" value="A/B=30-160"/>
</dbReference>
<dbReference type="PDB" id="5XAX">
    <property type="method" value="X-ray"/>
    <property type="resolution" value="2.90 A"/>
    <property type="chains" value="A/B=30-160"/>
</dbReference>
<dbReference type="PDBsum" id="5AYQ"/>
<dbReference type="PDBsum" id="5XAX"/>
<dbReference type="SMR" id="Q7M729"/>
<dbReference type="BioGRID" id="239935">
    <property type="interactions" value="1"/>
</dbReference>
<dbReference type="FunCoup" id="Q7M729">
    <property type="interactions" value="571"/>
</dbReference>
<dbReference type="STRING" id="10090.ENSMUSP00000062507"/>
<dbReference type="GlyConnect" id="2721">
    <property type="glycosylation" value="8 N-Linked glycans (3 sites)"/>
</dbReference>
<dbReference type="GlyCosmos" id="Q7M729">
    <property type="glycosylation" value="4 sites, 8 glycans"/>
</dbReference>
<dbReference type="GlyGen" id="Q7M729">
    <property type="glycosylation" value="5 sites, 9 N-linked glycans (3 sites), 1 O-linked glycan (1 site)"/>
</dbReference>
<dbReference type="iPTMnet" id="Q7M729"/>
<dbReference type="PhosphoSitePlus" id="Q7M729"/>
<dbReference type="PaxDb" id="10090-ENSMUSP00000062507"/>
<dbReference type="ProteomicsDB" id="256750"/>
<dbReference type="ABCD" id="Q7M729">
    <property type="antibodies" value="1 sequenced antibody"/>
</dbReference>
<dbReference type="Antibodypedia" id="2645">
    <property type="antibodies" value="136 antibodies from 27 providers"/>
</dbReference>
<dbReference type="DNASU" id="399548"/>
<dbReference type="Ensembl" id="ENSMUST00000060125.7">
    <property type="protein sequence ID" value="ENSMUSP00000062507.6"/>
    <property type="gene ID" value="ENSMUSG00000046480.7"/>
</dbReference>
<dbReference type="GeneID" id="399548"/>
<dbReference type="KEGG" id="mmu:399548"/>
<dbReference type="UCSC" id="uc009pfh.1">
    <property type="organism name" value="mouse"/>
</dbReference>
<dbReference type="AGR" id="MGI:2687406"/>
<dbReference type="CTD" id="6330"/>
<dbReference type="MGI" id="MGI:2687406">
    <property type="gene designation" value="Scn4b"/>
</dbReference>
<dbReference type="VEuPathDB" id="HostDB:ENSMUSG00000046480"/>
<dbReference type="eggNOG" id="ENOG502QTZ6">
    <property type="taxonomic scope" value="Eukaryota"/>
</dbReference>
<dbReference type="GeneTree" id="ENSGT01030000234556"/>
<dbReference type="HOGENOM" id="CLU_104235_0_0_1"/>
<dbReference type="InParanoid" id="Q7M729"/>
<dbReference type="OMA" id="HQATIIL"/>
<dbReference type="OrthoDB" id="8778219at2759"/>
<dbReference type="PhylomeDB" id="Q7M729"/>
<dbReference type="TreeFam" id="TF331728"/>
<dbReference type="BioGRID-ORCS" id="399548">
    <property type="hits" value="3 hits in 78 CRISPR screens"/>
</dbReference>
<dbReference type="ChiTaRS" id="Scn4b">
    <property type="organism name" value="mouse"/>
</dbReference>
<dbReference type="PRO" id="PR:Q7M729"/>
<dbReference type="Proteomes" id="UP000000589">
    <property type="component" value="Chromosome 9"/>
</dbReference>
<dbReference type="RNAct" id="Q7M729">
    <property type="molecule type" value="protein"/>
</dbReference>
<dbReference type="Bgee" id="ENSMUSG00000046480">
    <property type="expression patterns" value="Expressed in triceps brachii and 110 other cell types or tissues"/>
</dbReference>
<dbReference type="ExpressionAtlas" id="Q7M729">
    <property type="expression patterns" value="baseline and differential"/>
</dbReference>
<dbReference type="GO" id="GO:0014704">
    <property type="term" value="C:intercalated disc"/>
    <property type="evidence" value="ECO:0000314"/>
    <property type="project" value="BHF-UCL"/>
</dbReference>
<dbReference type="GO" id="GO:0005886">
    <property type="term" value="C:plasma membrane"/>
    <property type="evidence" value="ECO:0000250"/>
    <property type="project" value="UniProtKB"/>
</dbReference>
<dbReference type="GO" id="GO:0001518">
    <property type="term" value="C:voltage-gated sodium channel complex"/>
    <property type="evidence" value="ECO:0000250"/>
    <property type="project" value="UniProtKB"/>
</dbReference>
<dbReference type="GO" id="GO:0017080">
    <property type="term" value="F:sodium channel regulator activity"/>
    <property type="evidence" value="ECO:0000250"/>
    <property type="project" value="UniProtKB"/>
</dbReference>
<dbReference type="GO" id="GO:0044325">
    <property type="term" value="F:transmembrane transporter binding"/>
    <property type="evidence" value="ECO:0007669"/>
    <property type="project" value="Ensembl"/>
</dbReference>
<dbReference type="GO" id="GO:0005248">
    <property type="term" value="F:voltage-gated sodium channel activity"/>
    <property type="evidence" value="ECO:0000314"/>
    <property type="project" value="MGI"/>
</dbReference>
<dbReference type="GO" id="GO:0086006">
    <property type="term" value="F:voltage-gated sodium channel activity involved in cardiac muscle cell action potential"/>
    <property type="evidence" value="ECO:0007669"/>
    <property type="project" value="Ensembl"/>
</dbReference>
<dbReference type="GO" id="GO:0086016">
    <property type="term" value="P:AV node cell action potential"/>
    <property type="evidence" value="ECO:0007669"/>
    <property type="project" value="Ensembl"/>
</dbReference>
<dbReference type="GO" id="GO:0086002">
    <property type="term" value="P:cardiac muscle cell action potential involved in contraction"/>
    <property type="evidence" value="ECO:0007669"/>
    <property type="project" value="Ensembl"/>
</dbReference>
<dbReference type="GO" id="GO:0051649">
    <property type="term" value="P:establishment of localization in cell"/>
    <property type="evidence" value="ECO:0000314"/>
    <property type="project" value="MGI"/>
</dbReference>
<dbReference type="GO" id="GO:0019228">
    <property type="term" value="P:neuronal action potential"/>
    <property type="evidence" value="ECO:0000250"/>
    <property type="project" value="UniProtKB"/>
</dbReference>
<dbReference type="GO" id="GO:0010765">
    <property type="term" value="P:positive regulation of sodium ion transport"/>
    <property type="evidence" value="ECO:0007669"/>
    <property type="project" value="Ensembl"/>
</dbReference>
<dbReference type="GO" id="GO:0086091">
    <property type="term" value="P:regulation of heart rate by cardiac conduction"/>
    <property type="evidence" value="ECO:0007669"/>
    <property type="project" value="Ensembl"/>
</dbReference>
<dbReference type="GO" id="GO:0060307">
    <property type="term" value="P:regulation of ventricular cardiac muscle cell membrane repolarization"/>
    <property type="evidence" value="ECO:0007669"/>
    <property type="project" value="Ensembl"/>
</dbReference>
<dbReference type="GO" id="GO:0035725">
    <property type="term" value="P:sodium ion transmembrane transport"/>
    <property type="evidence" value="ECO:0000314"/>
    <property type="project" value="MGI"/>
</dbReference>
<dbReference type="FunFam" id="2.60.40.10:FF:001260">
    <property type="entry name" value="Sodium channel subunit beta-4"/>
    <property type="match status" value="1"/>
</dbReference>
<dbReference type="Gene3D" id="2.60.40.10">
    <property type="entry name" value="Immunoglobulins"/>
    <property type="match status" value="1"/>
</dbReference>
<dbReference type="InterPro" id="IPR007110">
    <property type="entry name" value="Ig-like_dom"/>
</dbReference>
<dbReference type="InterPro" id="IPR036179">
    <property type="entry name" value="Ig-like_dom_sf"/>
</dbReference>
<dbReference type="InterPro" id="IPR013783">
    <property type="entry name" value="Ig-like_fold"/>
</dbReference>
<dbReference type="InterPro" id="IPR003599">
    <property type="entry name" value="Ig_sub"/>
</dbReference>
<dbReference type="InterPro" id="IPR013106">
    <property type="entry name" value="Ig_V-set"/>
</dbReference>
<dbReference type="InterPro" id="IPR000920">
    <property type="entry name" value="Myelin_P0-rel"/>
</dbReference>
<dbReference type="PANTHER" id="PTHR13869">
    <property type="entry name" value="MYELIN P0 RELATED"/>
    <property type="match status" value="1"/>
</dbReference>
<dbReference type="PANTHER" id="PTHR13869:SF14">
    <property type="entry name" value="SODIUM CHANNEL SUBUNIT BETA-4"/>
    <property type="match status" value="1"/>
</dbReference>
<dbReference type="Pfam" id="PF07686">
    <property type="entry name" value="V-set"/>
    <property type="match status" value="1"/>
</dbReference>
<dbReference type="SMART" id="SM00409">
    <property type="entry name" value="IG"/>
    <property type="match status" value="1"/>
</dbReference>
<dbReference type="SUPFAM" id="SSF48726">
    <property type="entry name" value="Immunoglobulin"/>
    <property type="match status" value="1"/>
</dbReference>
<dbReference type="PROSITE" id="PS50835">
    <property type="entry name" value="IG_LIKE"/>
    <property type="match status" value="1"/>
</dbReference>
<organism>
    <name type="scientific">Mus musculus</name>
    <name type="common">Mouse</name>
    <dbReference type="NCBI Taxonomy" id="10090"/>
    <lineage>
        <taxon>Eukaryota</taxon>
        <taxon>Metazoa</taxon>
        <taxon>Chordata</taxon>
        <taxon>Craniata</taxon>
        <taxon>Vertebrata</taxon>
        <taxon>Euteleostomi</taxon>
        <taxon>Mammalia</taxon>
        <taxon>Eutheria</taxon>
        <taxon>Euarchontoglires</taxon>
        <taxon>Glires</taxon>
        <taxon>Rodentia</taxon>
        <taxon>Myomorpha</taxon>
        <taxon>Muroidea</taxon>
        <taxon>Muridae</taxon>
        <taxon>Murinae</taxon>
        <taxon>Mus</taxon>
        <taxon>Mus</taxon>
    </lineage>
</organism>
<keyword id="KW-0002">3D-structure</keyword>
<keyword id="KW-1003">Cell membrane</keyword>
<keyword id="KW-1015">Disulfide bond</keyword>
<keyword id="KW-0325">Glycoprotein</keyword>
<keyword id="KW-0393">Immunoglobulin domain</keyword>
<keyword id="KW-0406">Ion transport</keyword>
<keyword id="KW-0472">Membrane</keyword>
<keyword id="KW-1185">Reference proteome</keyword>
<keyword id="KW-0732">Signal</keyword>
<keyword id="KW-0915">Sodium</keyword>
<keyword id="KW-0739">Sodium transport</keyword>
<keyword id="KW-0812">Transmembrane</keyword>
<keyword id="KW-1133">Transmembrane helix</keyword>
<keyword id="KW-0813">Transport</keyword>
<protein>
    <recommendedName>
        <fullName evidence="1">Sodium channel regulatory subunit beta-4</fullName>
    </recommendedName>
</protein>